<accession>Q9HDZ9</accession>
<evidence type="ECO:0000250" key="1">
    <source>
        <dbReference type="UniProtKB" id="D1C7A6"/>
    </source>
</evidence>
<evidence type="ECO:0000250" key="2">
    <source>
        <dbReference type="UniProtKB" id="Q5T6V5"/>
    </source>
</evidence>
<evidence type="ECO:0000269" key="3">
    <source>
    </source>
</evidence>
<evidence type="ECO:0000269" key="4">
    <source>
    </source>
</evidence>
<evidence type="ECO:0000305" key="5"/>
<evidence type="ECO:0000305" key="6">
    <source>
    </source>
</evidence>
<comment type="function">
    <text evidence="2 4">Catalyzes the hydrolysis of queuosine 5'-phosphate, releasing the nucleobase queuine (q) (By similarity). Is required for salvage of queuine from exogenous queuosine (Q) that is imported and then converted to queuosine 5'-phosphate intracellularly (PubMed:36610787).</text>
</comment>
<comment type="catalytic activity">
    <reaction evidence="2">
        <text>queuosine 5'-phosphate + H2O = queuine + D-ribose 5-phosphate</text>
        <dbReference type="Rhea" id="RHEA:75387"/>
        <dbReference type="ChEBI" id="CHEBI:15377"/>
        <dbReference type="ChEBI" id="CHEBI:17433"/>
        <dbReference type="ChEBI" id="CHEBI:78346"/>
        <dbReference type="ChEBI" id="CHEBI:194371"/>
    </reaction>
    <physiologicalReaction direction="left-to-right" evidence="2">
        <dbReference type="Rhea" id="RHEA:75388"/>
    </physiologicalReaction>
</comment>
<comment type="disruption phenotype">
    <text evidence="3 4">Lacks queuosine in tRNA(Asp) (PubMed:24911101). Supplying exogenous queuosine (Q) or queuine (q) results in q incorporation in tRNA(Asp) in the wild-type S.pombe strain, whereas the deletion mutant strain fails to utilize exogenous Q to modify its tRNA while retaining the ability to use q (PubMed:36610787).</text>
</comment>
<comment type="miscellaneous">
    <text evidence="6">Eukaryotes lack the canonical genes for de novo biosynthesis of queuosine (Q), present in most bacteria. Therefore, this molecule must be sourced from ingested food and/or the gut microbiota, and metabolized to its corresponding nucleobase, queuine (q), before incorporation into cytoplasmic and mitochondrial tRNAs. Incorporation of q into the anticodon of some tRNAs contributes to translational efficiency and accuracy.</text>
</comment>
<comment type="similarity">
    <text evidence="5">Belongs to the QNG1 protein family.</text>
</comment>
<protein>
    <recommendedName>
        <fullName evidence="6">Queuosine 5'-phosphate N-glycosylase/hydrolase</fullName>
        <ecNumber evidence="2">3.2.2.-</ecNumber>
    </recommendedName>
    <alternativeName>
        <fullName evidence="6">Queuosine-nucleotide N-glycosylase/hydrolase</fullName>
    </alternativeName>
</protein>
<organism>
    <name type="scientific">Schizosaccharomyces pombe (strain 972 / ATCC 24843)</name>
    <name type="common">Fission yeast</name>
    <dbReference type="NCBI Taxonomy" id="284812"/>
    <lineage>
        <taxon>Eukaryota</taxon>
        <taxon>Fungi</taxon>
        <taxon>Dikarya</taxon>
        <taxon>Ascomycota</taxon>
        <taxon>Taphrinomycotina</taxon>
        <taxon>Schizosaccharomycetes</taxon>
        <taxon>Schizosaccharomycetales</taxon>
        <taxon>Schizosaccharomycetaceae</taxon>
        <taxon>Schizosaccharomyces</taxon>
    </lineage>
</organism>
<proteinExistence type="inferred from homology"/>
<gene>
    <name type="ORF">SPAC589.05c</name>
</gene>
<name>QNG1_SCHPO</name>
<dbReference type="EC" id="3.2.2.-" evidence="2"/>
<dbReference type="EMBL" id="CU329670">
    <property type="protein sequence ID" value="CAC19762.1"/>
    <property type="molecule type" value="Genomic_DNA"/>
</dbReference>
<dbReference type="SMR" id="Q9HDZ9"/>
<dbReference type="BioGRID" id="279035">
    <property type="interactions" value="1"/>
</dbReference>
<dbReference type="FunCoup" id="Q9HDZ9">
    <property type="interactions" value="221"/>
</dbReference>
<dbReference type="STRING" id="284812.Q9HDZ9"/>
<dbReference type="PaxDb" id="4896-SPAC589.05c.1"/>
<dbReference type="EnsemblFungi" id="SPAC589.05c.1">
    <property type="protein sequence ID" value="SPAC589.05c.1:pep"/>
    <property type="gene ID" value="SPAC589.05c"/>
</dbReference>
<dbReference type="KEGG" id="spo:2542579"/>
<dbReference type="PomBase" id="SPAC589.05c"/>
<dbReference type="VEuPathDB" id="FungiDB:SPAC589.05c"/>
<dbReference type="eggNOG" id="KOG2524">
    <property type="taxonomic scope" value="Eukaryota"/>
</dbReference>
<dbReference type="HOGENOM" id="CLU_036001_2_1_1"/>
<dbReference type="InParanoid" id="Q9HDZ9"/>
<dbReference type="OMA" id="FSFWSEE"/>
<dbReference type="PhylomeDB" id="Q9HDZ9"/>
<dbReference type="PRO" id="PR:Q9HDZ9"/>
<dbReference type="Proteomes" id="UP000002485">
    <property type="component" value="Chromosome I"/>
</dbReference>
<dbReference type="GO" id="GO:0005829">
    <property type="term" value="C:cytosol"/>
    <property type="evidence" value="ECO:0007005"/>
    <property type="project" value="PomBase"/>
</dbReference>
<dbReference type="GO" id="GO:0106432">
    <property type="term" value="F:queuosine nucleosidase activity"/>
    <property type="evidence" value="ECO:0000314"/>
    <property type="project" value="PomBase"/>
</dbReference>
<dbReference type="GO" id="GO:0043174">
    <property type="term" value="P:nucleoside salvage"/>
    <property type="evidence" value="ECO:0000250"/>
    <property type="project" value="UniProtKB"/>
</dbReference>
<dbReference type="GO" id="GO:0101030">
    <property type="term" value="P:tRNA-guanine transglycosylation"/>
    <property type="evidence" value="ECO:0000315"/>
    <property type="project" value="PomBase"/>
</dbReference>
<dbReference type="InterPro" id="IPR019438">
    <property type="entry name" value="Q_salvage"/>
</dbReference>
<dbReference type="PANTHER" id="PTHR21314:SF0">
    <property type="entry name" value="QUEUOSINE 5'-PHOSPHATE N-GLYCOSYLASE_HYDROLASE"/>
    <property type="match status" value="1"/>
</dbReference>
<dbReference type="PANTHER" id="PTHR21314">
    <property type="entry name" value="QUEUOSINE 5'-PHOSPHATE N-GLYCOSYLASE_HYDROLASE-RELATED"/>
    <property type="match status" value="1"/>
</dbReference>
<dbReference type="Pfam" id="PF10343">
    <property type="entry name" value="Q_salvage"/>
    <property type="match status" value="1"/>
</dbReference>
<sequence>MSRVLQDAEFISLNSNDVKVNKGGCAAVATWIKEKLDSLGPQFAEWQNHELHPKTRDVSTLDWIFLVDILNFSFWSDVDVEDSGKHSKRFSIEYKGKLYTGYWSLCAAINKALDAGIPITSPAFYADEKQCPDTLIASVFDSATVEKIPLLEERIRIMRASGRVLVDSYHGSYCGLLKKCHNQAQRLIKLLLADFPDFRDVSVYKGRECYMLKRAQILVAETWACFQGQNYGRFDDIDSITMFADYRVPQILWQLGCLSYSSDFKKRLLKNELIAHNDPMEIEMRGCSIWAVEKILQNINRKDVNAITIDFFLWDLAKEWQAKGYKPSTQVDEVTIPCIRVRSIYY</sequence>
<reference key="1">
    <citation type="journal article" date="2002" name="Nature">
        <title>The genome sequence of Schizosaccharomyces pombe.</title>
        <authorList>
            <person name="Wood V."/>
            <person name="Gwilliam R."/>
            <person name="Rajandream M.A."/>
            <person name="Lyne M.H."/>
            <person name="Lyne R."/>
            <person name="Stewart A."/>
            <person name="Sgouros J.G."/>
            <person name="Peat N."/>
            <person name="Hayles J."/>
            <person name="Baker S.G."/>
            <person name="Basham D."/>
            <person name="Bowman S."/>
            <person name="Brooks K."/>
            <person name="Brown D."/>
            <person name="Brown S."/>
            <person name="Chillingworth T."/>
            <person name="Churcher C.M."/>
            <person name="Collins M."/>
            <person name="Connor R."/>
            <person name="Cronin A."/>
            <person name="Davis P."/>
            <person name="Feltwell T."/>
            <person name="Fraser A."/>
            <person name="Gentles S."/>
            <person name="Goble A."/>
            <person name="Hamlin N."/>
            <person name="Harris D.E."/>
            <person name="Hidalgo J."/>
            <person name="Hodgson G."/>
            <person name="Holroyd S."/>
            <person name="Hornsby T."/>
            <person name="Howarth S."/>
            <person name="Huckle E.J."/>
            <person name="Hunt S."/>
            <person name="Jagels K."/>
            <person name="James K.D."/>
            <person name="Jones L."/>
            <person name="Jones M."/>
            <person name="Leather S."/>
            <person name="McDonald S."/>
            <person name="McLean J."/>
            <person name="Mooney P."/>
            <person name="Moule S."/>
            <person name="Mungall K.L."/>
            <person name="Murphy L.D."/>
            <person name="Niblett D."/>
            <person name="Odell C."/>
            <person name="Oliver K."/>
            <person name="O'Neil S."/>
            <person name="Pearson D."/>
            <person name="Quail M.A."/>
            <person name="Rabbinowitsch E."/>
            <person name="Rutherford K.M."/>
            <person name="Rutter S."/>
            <person name="Saunders D."/>
            <person name="Seeger K."/>
            <person name="Sharp S."/>
            <person name="Skelton J."/>
            <person name="Simmonds M.N."/>
            <person name="Squares R."/>
            <person name="Squares S."/>
            <person name="Stevens K."/>
            <person name="Taylor K."/>
            <person name="Taylor R.G."/>
            <person name="Tivey A."/>
            <person name="Walsh S.V."/>
            <person name="Warren T."/>
            <person name="Whitehead S."/>
            <person name="Woodward J.R."/>
            <person name="Volckaert G."/>
            <person name="Aert R."/>
            <person name="Robben J."/>
            <person name="Grymonprez B."/>
            <person name="Weltjens I."/>
            <person name="Vanstreels E."/>
            <person name="Rieger M."/>
            <person name="Schaefer M."/>
            <person name="Mueller-Auer S."/>
            <person name="Gabel C."/>
            <person name="Fuchs M."/>
            <person name="Duesterhoeft A."/>
            <person name="Fritzc C."/>
            <person name="Holzer E."/>
            <person name="Moestl D."/>
            <person name="Hilbert H."/>
            <person name="Borzym K."/>
            <person name="Langer I."/>
            <person name="Beck A."/>
            <person name="Lehrach H."/>
            <person name="Reinhardt R."/>
            <person name="Pohl T.M."/>
            <person name="Eger P."/>
            <person name="Zimmermann W."/>
            <person name="Wedler H."/>
            <person name="Wambutt R."/>
            <person name="Purnelle B."/>
            <person name="Goffeau A."/>
            <person name="Cadieu E."/>
            <person name="Dreano S."/>
            <person name="Gloux S."/>
            <person name="Lelaure V."/>
            <person name="Mottier S."/>
            <person name="Galibert F."/>
            <person name="Aves S.J."/>
            <person name="Xiang Z."/>
            <person name="Hunt C."/>
            <person name="Moore K."/>
            <person name="Hurst S.M."/>
            <person name="Lucas M."/>
            <person name="Rochet M."/>
            <person name="Gaillardin C."/>
            <person name="Tallada V.A."/>
            <person name="Garzon A."/>
            <person name="Thode G."/>
            <person name="Daga R.R."/>
            <person name="Cruzado L."/>
            <person name="Jimenez J."/>
            <person name="Sanchez M."/>
            <person name="del Rey F."/>
            <person name="Benito J."/>
            <person name="Dominguez A."/>
            <person name="Revuelta J.L."/>
            <person name="Moreno S."/>
            <person name="Armstrong J."/>
            <person name="Forsburg S.L."/>
            <person name="Cerutti L."/>
            <person name="Lowe T."/>
            <person name="McCombie W.R."/>
            <person name="Paulsen I."/>
            <person name="Potashkin J."/>
            <person name="Shpakovski G.V."/>
            <person name="Ussery D."/>
            <person name="Barrell B.G."/>
            <person name="Nurse P."/>
        </authorList>
    </citation>
    <scope>NUCLEOTIDE SEQUENCE [LARGE SCALE GENOMIC DNA]</scope>
    <source>
        <strain>972 / ATCC 24843</strain>
    </source>
</reference>
<reference key="2">
    <citation type="journal article" date="2014" name="ACS Chem. Biol.">
        <title>Plant, animal, and fungal micronutrient queuosine is salvaged by members of the DUF2419 protein family.</title>
        <authorList>
            <person name="Zallot R."/>
            <person name="Brochier-Armanet C."/>
            <person name="Gaston K.W."/>
            <person name="Forouhar F."/>
            <person name="Limbach P.A."/>
            <person name="Hunt J.F."/>
            <person name="de Crecy-Lagard V."/>
        </authorList>
    </citation>
    <scope>DISRUPTION PHENOTYPE</scope>
</reference>
<reference key="3">
    <citation type="journal article" date="2023" name="Nucleic Acids Res.">
        <title>Structural basis of Qng1-mediated salvage of the micronutrient queuine from queuosine-5'-monophosphate as the biological substrate.</title>
        <authorList>
            <person name="Hung S.H."/>
            <person name="Elliott G.I."/>
            <person name="Ramkumar T.R."/>
            <person name="Burtnyak L."/>
            <person name="McGrenaghan C.J."/>
            <person name="Alkuzweny S."/>
            <person name="Quaiyum S."/>
            <person name="Iwata-Reuyl D."/>
            <person name="Pan X."/>
            <person name="Green B.D."/>
            <person name="Kelly V.P."/>
            <person name="de Crecy-Lagard V."/>
            <person name="Swairjo M.A."/>
        </authorList>
    </citation>
    <scope>FUNCTION</scope>
    <scope>DISRUPTION PHENOTYPE</scope>
</reference>
<keyword id="KW-0378">Hydrolase</keyword>
<keyword id="KW-1185">Reference proteome</keyword>
<feature type="chain" id="PRO_0000327925" description="Queuosine 5'-phosphate N-glycosylase/hydrolase">
    <location>
        <begin position="1"/>
        <end position="346"/>
    </location>
</feature>
<feature type="active site" description="Nucleophile or transition state stabilizer" evidence="1">
    <location>
        <position position="245"/>
    </location>
</feature>
<feature type="binding site" evidence="2">
    <location>
        <position position="49"/>
    </location>
    <ligand>
        <name>queuine</name>
        <dbReference type="ChEBI" id="CHEBI:17433"/>
    </ligand>
</feature>
<feature type="binding site" evidence="2">
    <location>
        <position position="243"/>
    </location>
    <ligand>
        <name>queuine</name>
        <dbReference type="ChEBI" id="CHEBI:17433"/>
    </ligand>
</feature>
<feature type="binding site" evidence="2">
    <location>
        <position position="245"/>
    </location>
    <ligand>
        <name>queuine</name>
        <dbReference type="ChEBI" id="CHEBI:17433"/>
    </ligand>
</feature>
<feature type="binding site" evidence="2">
    <location>
        <position position="310"/>
    </location>
    <ligand>
        <name>queuine</name>
        <dbReference type="ChEBI" id="CHEBI:17433"/>
    </ligand>
</feature>
<feature type="binding site" evidence="2">
    <location>
        <position position="315"/>
    </location>
    <ligand>
        <name>queuine</name>
        <dbReference type="ChEBI" id="CHEBI:17433"/>
    </ligand>
</feature>